<feature type="chain" id="PRO_0000201940" description="Hydrogenase expression/formation protein HupD">
    <location>
        <begin position="1"/>
        <end position="210"/>
    </location>
</feature>
<feature type="binding site" evidence="1">
    <location>
        <position position="22"/>
    </location>
    <ligand>
        <name>Ni(2+)</name>
        <dbReference type="ChEBI" id="CHEBI:49786"/>
    </ligand>
</feature>
<feature type="binding site" evidence="1">
    <location>
        <position position="68"/>
    </location>
    <ligand>
        <name>Ni(2+)</name>
        <dbReference type="ChEBI" id="CHEBI:49786"/>
    </ligand>
</feature>
<feature type="binding site" evidence="1">
    <location>
        <position position="99"/>
    </location>
    <ligand>
        <name>Ni(2+)</name>
        <dbReference type="ChEBI" id="CHEBI:49786"/>
    </ligand>
</feature>
<gene>
    <name type="primary">hupD</name>
</gene>
<organism>
    <name type="scientific">Rhodobacter capsulatus</name>
    <name type="common">Rhodopseudomonas capsulata</name>
    <dbReference type="NCBI Taxonomy" id="1061"/>
    <lineage>
        <taxon>Bacteria</taxon>
        <taxon>Pseudomonadati</taxon>
        <taxon>Pseudomonadota</taxon>
        <taxon>Alphaproteobacteria</taxon>
        <taxon>Rhodobacterales</taxon>
        <taxon>Rhodobacter group</taxon>
        <taxon>Rhodobacter</taxon>
    </lineage>
</organism>
<sequence>MPAFKPERVLVLGIGNVLWADEGFGVRCVERMAETHALPANVRLLDGGTQGLYLLPFLEEAEALIVFDAVDFGFTPGTLVTMRDDDVPAFMGAKKMSLHQTGFQDVIATAQLMGYCPSRMTLIGCQPVELEDYGGSLRPAVAGQIDFAIAEAVRELRAWGIEVTKGATISNDLVDPSLARDAYERGRPSEDEACRIGDHRFFPSAAKVRA</sequence>
<dbReference type="EMBL" id="Z15089">
    <property type="protein sequence ID" value="CAA78798.1"/>
    <property type="molecule type" value="Genomic_DNA"/>
</dbReference>
<dbReference type="PIR" id="S32941">
    <property type="entry name" value="S32941"/>
</dbReference>
<dbReference type="RefSeq" id="WP_013066514.1">
    <property type="nucleotide sequence ID" value="NZ_VIBE01000017.1"/>
</dbReference>
<dbReference type="SMR" id="Q03004"/>
<dbReference type="MEROPS" id="A31.002"/>
<dbReference type="OMA" id="IGCQPLD"/>
<dbReference type="GO" id="GO:0004190">
    <property type="term" value="F:aspartic-type endopeptidase activity"/>
    <property type="evidence" value="ECO:0007669"/>
    <property type="project" value="UniProtKB-KW"/>
</dbReference>
<dbReference type="GO" id="GO:0008047">
    <property type="term" value="F:enzyme activator activity"/>
    <property type="evidence" value="ECO:0007669"/>
    <property type="project" value="InterPro"/>
</dbReference>
<dbReference type="GO" id="GO:0046872">
    <property type="term" value="F:metal ion binding"/>
    <property type="evidence" value="ECO:0007669"/>
    <property type="project" value="UniProtKB-KW"/>
</dbReference>
<dbReference type="GO" id="GO:0016485">
    <property type="term" value="P:protein processing"/>
    <property type="evidence" value="ECO:0007669"/>
    <property type="project" value="InterPro"/>
</dbReference>
<dbReference type="CDD" id="cd06062">
    <property type="entry name" value="H2MP_MemB-H2up"/>
    <property type="match status" value="1"/>
</dbReference>
<dbReference type="FunFam" id="3.40.50.1450:FF:000002">
    <property type="entry name" value="Hydrogenase 1 maturation protease"/>
    <property type="match status" value="1"/>
</dbReference>
<dbReference type="Gene3D" id="3.40.50.1450">
    <property type="entry name" value="HybD-like"/>
    <property type="match status" value="1"/>
</dbReference>
<dbReference type="InterPro" id="IPR004419">
    <property type="entry name" value="Pept_A31_hyd_express"/>
</dbReference>
<dbReference type="InterPro" id="IPR023430">
    <property type="entry name" value="Pept_HybD-like_dom_sf"/>
</dbReference>
<dbReference type="InterPro" id="IPR000671">
    <property type="entry name" value="Peptidase_A31"/>
</dbReference>
<dbReference type="NCBIfam" id="TIGR00140">
    <property type="entry name" value="hupD"/>
    <property type="match status" value="1"/>
</dbReference>
<dbReference type="NCBIfam" id="TIGR00072">
    <property type="entry name" value="hydrog_prot"/>
    <property type="match status" value="1"/>
</dbReference>
<dbReference type="PANTHER" id="PTHR30302">
    <property type="entry name" value="HYDROGENASE 1 MATURATION PROTEASE"/>
    <property type="match status" value="1"/>
</dbReference>
<dbReference type="PANTHER" id="PTHR30302:SF1">
    <property type="entry name" value="HYDROGENASE 2 MATURATION PROTEASE"/>
    <property type="match status" value="1"/>
</dbReference>
<dbReference type="Pfam" id="PF01750">
    <property type="entry name" value="HycI"/>
    <property type="match status" value="1"/>
</dbReference>
<dbReference type="PRINTS" id="PR00446">
    <property type="entry name" value="HYDRGNUPTAKE"/>
</dbReference>
<dbReference type="SUPFAM" id="SSF53163">
    <property type="entry name" value="HybD-like"/>
    <property type="match status" value="1"/>
</dbReference>
<accession>Q03004</accession>
<protein>
    <recommendedName>
        <fullName>Hydrogenase expression/formation protein HupD</fullName>
    </recommendedName>
</protein>
<reference key="1">
    <citation type="journal article" date="1993" name="Mol. Microbiol.">
        <title>Organization of the genes necessary for hydrogenase expression in Rhodobacter capsulatus. Sequence analysis and identification of two hyp regulatory mutants.</title>
        <authorList>
            <person name="Colbeau A."/>
            <person name="Richaud P."/>
            <person name="Toussaint B."/>
            <person name="Caballero F.J."/>
            <person name="Elster C."/>
            <person name="Delphin C."/>
            <person name="Smith R.L."/>
            <person name="Chabert J."/>
            <person name="Vignais P.M."/>
        </authorList>
    </citation>
    <scope>NUCLEOTIDE SEQUENCE [GENOMIC DNA]</scope>
    <source>
        <strain>ATCC 33303 / B10</strain>
    </source>
</reference>
<name>HUPD_RHOCA</name>
<comment type="function">
    <text>Not known. Could be involved in the processing of hydrogenase.</text>
</comment>
<comment type="similarity">
    <text evidence="2">Belongs to the peptidase A31 family.</text>
</comment>
<keyword id="KW-0064">Aspartyl protease</keyword>
<keyword id="KW-0378">Hydrolase</keyword>
<keyword id="KW-0479">Metal-binding</keyword>
<keyword id="KW-0533">Nickel</keyword>
<keyword id="KW-0645">Protease</keyword>
<evidence type="ECO:0000250" key="1"/>
<evidence type="ECO:0000305" key="2"/>
<proteinExistence type="inferred from homology"/>